<keyword id="KW-0273">Eye lens protein</keyword>
<keyword id="KW-0677">Repeat</keyword>
<reference key="1">
    <citation type="journal article" date="1992" name="J. Biol. Chem.">
        <title>Characterization of squid crystallin genes. Comparison with mammalian glutathione S-transferase genes.</title>
        <authorList>
            <person name="Tomarev S.I."/>
            <person name="Zinovieva R.D."/>
            <person name="Piatigorsky J."/>
        </authorList>
    </citation>
    <scope>NUCLEOTIDE SEQUENCE [MRNA]</scope>
</reference>
<evidence type="ECO:0000255" key="1"/>
<evidence type="ECO:0000256" key="2">
    <source>
        <dbReference type="SAM" id="MobiDB-lite"/>
    </source>
</evidence>
<evidence type="ECO:0000305" key="3"/>
<dbReference type="EMBL" id="M74327">
    <property type="protein sequence ID" value="AAA91343.1"/>
    <property type="molecule type" value="mRNA"/>
</dbReference>
<dbReference type="PIR" id="A38100">
    <property type="entry name" value="A38100"/>
</dbReference>
<dbReference type="SMR" id="P27015"/>
<dbReference type="GO" id="GO:0005212">
    <property type="term" value="F:structural constituent of eye lens"/>
    <property type="evidence" value="ECO:0007669"/>
    <property type="project" value="UniProtKB-KW"/>
</dbReference>
<dbReference type="CDD" id="cd03192">
    <property type="entry name" value="GST_C_Sigma_like"/>
    <property type="match status" value="1"/>
</dbReference>
<dbReference type="Gene3D" id="1.20.1050.10">
    <property type="match status" value="1"/>
</dbReference>
<dbReference type="InterPro" id="IPR010987">
    <property type="entry name" value="Glutathione-S-Trfase_C-like"/>
</dbReference>
<dbReference type="InterPro" id="IPR036282">
    <property type="entry name" value="Glutathione-S-Trfase_C_sf"/>
</dbReference>
<dbReference type="InterPro" id="IPR004046">
    <property type="entry name" value="GST_C"/>
</dbReference>
<dbReference type="InterPro" id="IPR003083">
    <property type="entry name" value="S-crystallin"/>
</dbReference>
<dbReference type="Pfam" id="PF14497">
    <property type="entry name" value="GST_C_3"/>
    <property type="match status" value="1"/>
</dbReference>
<dbReference type="PRINTS" id="PR01269">
    <property type="entry name" value="SCRYSTALLIN"/>
</dbReference>
<dbReference type="SUPFAM" id="SSF47616">
    <property type="entry name" value="GST C-terminal domain-like"/>
    <property type="match status" value="1"/>
</dbReference>
<dbReference type="PROSITE" id="PS50405">
    <property type="entry name" value="GST_CTER"/>
    <property type="match status" value="1"/>
</dbReference>
<proteinExistence type="evidence at transcript level"/>
<organism>
    <name type="scientific">Nototodarus sloanii</name>
    <name type="common">Wellington flying squid</name>
    <name type="synonym">Ommastrephes sloanei</name>
    <dbReference type="NCBI Taxonomy" id="215440"/>
    <lineage>
        <taxon>Eukaryota</taxon>
        <taxon>Metazoa</taxon>
        <taxon>Spiralia</taxon>
        <taxon>Lophotrochozoa</taxon>
        <taxon>Mollusca</taxon>
        <taxon>Cephalopoda</taxon>
        <taxon>Coleoidea</taxon>
        <taxon>Decapodiformes</taxon>
        <taxon>Oegopsida</taxon>
        <taxon>Ommastrephidae</taxon>
        <taxon>Nototodarus</taxon>
    </lineage>
</organism>
<protein>
    <recommendedName>
        <fullName>S-crystallin SL4</fullName>
    </recommendedName>
</protein>
<sequence length="302" mass="34376">CFYEIVDDYLRLFHDKEGRIMYDQMSDMRNRYIDMDGRMTFGTVGGYAVQSRGDGGYYVKSRGDGGYPVQGRGDTGYSSQTRSDDACLGQGRGEVDTGMSYDASTGVCTDINRGDMSSDINSGLYSGGRMDDSCHTSESRRMDDPCGTDESRRLDVPCHSDDHYRSDNPCTDDSCQAEDRRGGHSDSHRIDISSEESASRRSRNHAFAEGRMSEMRLRYMETCRRVLPFMERTLEMQHGGDTFFCGDEMMLCDMMCYCALENPLMENASFFGQYPKLMALRERVASQINISQYIKRRYQSDF</sequence>
<feature type="chain" id="PRO_0000185999" description="S-crystallin SL4">
    <location>
        <begin position="1" status="less than"/>
        <end position="302"/>
    </location>
</feature>
<feature type="repeat" description="1">
    <location>
        <begin position="45"/>
        <end position="54"/>
    </location>
</feature>
<feature type="repeat" description="2">
    <location>
        <begin position="55"/>
        <end position="64"/>
    </location>
</feature>
<feature type="repeat" description="3">
    <location>
        <begin position="65"/>
        <end position="74"/>
    </location>
</feature>
<feature type="repeat" description="4; approximate">
    <location>
        <begin position="75"/>
        <end position="84"/>
    </location>
</feature>
<feature type="domain" description="GST C-terminal">
    <location>
        <begin position="183"/>
        <end position="302"/>
    </location>
</feature>
<feature type="region of interest" description="4 X approximate tandem repeats of G-G-Y-[AYP]-V-[QK]-[SG]-R-G-D">
    <location>
        <begin position="45"/>
        <end position="84"/>
    </location>
</feature>
<feature type="region of interest" description="Disordered" evidence="2">
    <location>
        <begin position="68"/>
        <end position="92"/>
    </location>
</feature>
<feature type="region of interest" description="Disordered" evidence="2">
    <location>
        <begin position="118"/>
        <end position="205"/>
    </location>
</feature>
<feature type="short sequence motif" description="Cell attachment site" evidence="1">
    <location>
        <begin position="52"/>
        <end position="54"/>
    </location>
</feature>
<feature type="short sequence motif" description="Cell attachment site" evidence="1">
    <location>
        <begin position="62"/>
        <end position="64"/>
    </location>
</feature>
<feature type="short sequence motif" description="Cell attachment site" evidence="1">
    <location>
        <begin position="72"/>
        <end position="74"/>
    </location>
</feature>
<feature type="short sequence motif" description="Cell attachment site" evidence="1">
    <location>
        <begin position="113"/>
        <end position="115"/>
    </location>
</feature>
<feature type="compositionally biased region" description="Basic and acidic residues" evidence="2">
    <location>
        <begin position="129"/>
        <end position="166"/>
    </location>
</feature>
<feature type="compositionally biased region" description="Basic and acidic residues" evidence="2">
    <location>
        <begin position="177"/>
        <end position="192"/>
    </location>
</feature>
<feature type="non-terminal residue">
    <location>
        <position position="1"/>
    </location>
</feature>
<name>SCRY4_NOTSL</name>
<accession>P27015</accession>
<comment type="function">
    <text>S-crystallins are structural components of squids and octopi eye lens.</text>
</comment>
<comment type="similarity">
    <text evidence="3">Belongs to the GST superfamily.</text>
</comment>